<organism>
    <name type="scientific">Persephonella marina (strain DSM 14350 / EX-H1)</name>
    <dbReference type="NCBI Taxonomy" id="123214"/>
    <lineage>
        <taxon>Bacteria</taxon>
        <taxon>Pseudomonadati</taxon>
        <taxon>Aquificota</taxon>
        <taxon>Aquificia</taxon>
        <taxon>Aquificales</taxon>
        <taxon>Hydrogenothermaceae</taxon>
        <taxon>Persephonella</taxon>
    </lineage>
</organism>
<proteinExistence type="inferred from homology"/>
<name>MTNB_PERMH</name>
<evidence type="ECO:0000255" key="1">
    <source>
        <dbReference type="HAMAP-Rule" id="MF_01677"/>
    </source>
</evidence>
<comment type="function">
    <text evidence="1">Catalyzes the dehydration of methylthioribulose-1-phosphate (MTRu-1-P) into 2,3-diketo-5-methylthiopentyl-1-phosphate (DK-MTP-1-P).</text>
</comment>
<comment type="catalytic activity">
    <reaction evidence="1">
        <text>5-(methylsulfanyl)-D-ribulose 1-phosphate = 5-methylsulfanyl-2,3-dioxopentyl phosphate + H2O</text>
        <dbReference type="Rhea" id="RHEA:15549"/>
        <dbReference type="ChEBI" id="CHEBI:15377"/>
        <dbReference type="ChEBI" id="CHEBI:58548"/>
        <dbReference type="ChEBI" id="CHEBI:58828"/>
        <dbReference type="EC" id="4.2.1.109"/>
    </reaction>
</comment>
<comment type="cofactor">
    <cofactor evidence="1">
        <name>Zn(2+)</name>
        <dbReference type="ChEBI" id="CHEBI:29105"/>
    </cofactor>
    <text evidence="1">Binds 1 zinc ion per subunit.</text>
</comment>
<comment type="pathway">
    <text evidence="1">Amino-acid biosynthesis; L-methionine biosynthesis via salvage pathway; L-methionine from S-methyl-5-thio-alpha-D-ribose 1-phosphate: step 2/6.</text>
</comment>
<comment type="similarity">
    <text evidence="1">Belongs to the aldolase class II family. MtnB subfamily.</text>
</comment>
<reference key="1">
    <citation type="journal article" date="2009" name="J. Bacteriol.">
        <title>Complete and draft genome sequences of six members of the Aquificales.</title>
        <authorList>
            <person name="Reysenbach A.-L."/>
            <person name="Hamamura N."/>
            <person name="Podar M."/>
            <person name="Griffiths E."/>
            <person name="Ferreira S."/>
            <person name="Hochstein R."/>
            <person name="Heidelberg J."/>
            <person name="Johnson J."/>
            <person name="Mead D."/>
            <person name="Pohorille A."/>
            <person name="Sarmiento M."/>
            <person name="Schweighofer K."/>
            <person name="Seshadri R."/>
            <person name="Voytek M.A."/>
        </authorList>
    </citation>
    <scope>NUCLEOTIDE SEQUENCE [LARGE SCALE GENOMIC DNA]</scope>
    <source>
        <strain>DSM 14350 / EX-H1</strain>
    </source>
</reference>
<protein>
    <recommendedName>
        <fullName evidence="1">Methylthioribulose-1-phosphate dehydratase</fullName>
        <shortName evidence="1">MTRu-1-P dehydratase</shortName>
        <ecNumber evidence="1">4.2.1.109</ecNumber>
    </recommendedName>
</protein>
<sequence length="215" mass="25046">MPYRLYQEEKQKAVNILNDIKVKLYNRGWFPATSGNLSYKLHDDPLYFAITSSGKDKGTVTHEDVIFVDKDAKPIEKTKLKPSAETKVHSQIYQRTDAGCVIHIHTVNNNFISQLYFEDGYVPIKDMEMIKALDIWKEDAFIKVPIIENFFDLDRLAEEAGKSINPEVPGLLIRNHGIYAWGRDEFEAKRHVEAFEFIFEYMRNMIIFKGCKDIF</sequence>
<dbReference type="EC" id="4.2.1.109" evidence="1"/>
<dbReference type="EMBL" id="CP001230">
    <property type="protein sequence ID" value="ACO03134.1"/>
    <property type="molecule type" value="Genomic_DNA"/>
</dbReference>
<dbReference type="RefSeq" id="WP_012675373.1">
    <property type="nucleotide sequence ID" value="NC_012440.1"/>
</dbReference>
<dbReference type="SMR" id="C0QSI8"/>
<dbReference type="STRING" id="123214.PERMA_1872"/>
<dbReference type="PaxDb" id="123214-PERMA_1872"/>
<dbReference type="KEGG" id="pmx:PERMA_1872"/>
<dbReference type="eggNOG" id="COG0235">
    <property type="taxonomic scope" value="Bacteria"/>
</dbReference>
<dbReference type="HOGENOM" id="CLU_006033_4_1_0"/>
<dbReference type="OrthoDB" id="9805559at2"/>
<dbReference type="UniPathway" id="UPA00904">
    <property type="reaction ID" value="UER00875"/>
</dbReference>
<dbReference type="Proteomes" id="UP000001366">
    <property type="component" value="Chromosome"/>
</dbReference>
<dbReference type="GO" id="GO:0005737">
    <property type="term" value="C:cytoplasm"/>
    <property type="evidence" value="ECO:0007669"/>
    <property type="project" value="InterPro"/>
</dbReference>
<dbReference type="GO" id="GO:0046570">
    <property type="term" value="F:methylthioribulose 1-phosphate dehydratase activity"/>
    <property type="evidence" value="ECO:0007669"/>
    <property type="project" value="UniProtKB-UniRule"/>
</dbReference>
<dbReference type="GO" id="GO:0008270">
    <property type="term" value="F:zinc ion binding"/>
    <property type="evidence" value="ECO:0007669"/>
    <property type="project" value="UniProtKB-UniRule"/>
</dbReference>
<dbReference type="GO" id="GO:0019509">
    <property type="term" value="P:L-methionine salvage from methylthioadenosine"/>
    <property type="evidence" value="ECO:0007669"/>
    <property type="project" value="UniProtKB-UniRule"/>
</dbReference>
<dbReference type="Gene3D" id="3.40.225.10">
    <property type="entry name" value="Class II aldolase/adducin N-terminal domain"/>
    <property type="match status" value="1"/>
</dbReference>
<dbReference type="HAMAP" id="MF_01677">
    <property type="entry name" value="Salvage_MtnB"/>
    <property type="match status" value="1"/>
</dbReference>
<dbReference type="InterPro" id="IPR001303">
    <property type="entry name" value="Aldolase_II/adducin_N"/>
</dbReference>
<dbReference type="InterPro" id="IPR036409">
    <property type="entry name" value="Aldolase_II/adducin_N_sf"/>
</dbReference>
<dbReference type="InterPro" id="IPR017714">
    <property type="entry name" value="MethylthioRu-1-P_deHdtase_MtnB"/>
</dbReference>
<dbReference type="NCBIfam" id="NF005244">
    <property type="entry name" value="PRK06754.1"/>
    <property type="match status" value="1"/>
</dbReference>
<dbReference type="NCBIfam" id="TIGR03328">
    <property type="entry name" value="salvage_mtnB"/>
    <property type="match status" value="1"/>
</dbReference>
<dbReference type="PANTHER" id="PTHR10640">
    <property type="entry name" value="METHYLTHIORIBULOSE-1-PHOSPHATE DEHYDRATASE"/>
    <property type="match status" value="1"/>
</dbReference>
<dbReference type="PANTHER" id="PTHR10640:SF7">
    <property type="entry name" value="METHYLTHIORIBULOSE-1-PHOSPHATE DEHYDRATASE"/>
    <property type="match status" value="1"/>
</dbReference>
<dbReference type="Pfam" id="PF00596">
    <property type="entry name" value="Aldolase_II"/>
    <property type="match status" value="1"/>
</dbReference>
<dbReference type="SMART" id="SM01007">
    <property type="entry name" value="Aldolase_II"/>
    <property type="match status" value="1"/>
</dbReference>
<dbReference type="SUPFAM" id="SSF53639">
    <property type="entry name" value="AraD/HMP-PK domain-like"/>
    <property type="match status" value="1"/>
</dbReference>
<gene>
    <name evidence="1" type="primary">mtnB</name>
    <name type="ordered locus">PERMA_1872</name>
</gene>
<accession>C0QSI8</accession>
<keyword id="KW-0028">Amino-acid biosynthesis</keyword>
<keyword id="KW-0456">Lyase</keyword>
<keyword id="KW-0479">Metal-binding</keyword>
<keyword id="KW-0486">Methionine biosynthesis</keyword>
<keyword id="KW-1185">Reference proteome</keyword>
<keyword id="KW-0862">Zinc</keyword>
<feature type="chain" id="PRO_1000187348" description="Methylthioribulose-1-phosphate dehydratase">
    <location>
        <begin position="1"/>
        <end position="215"/>
    </location>
</feature>
<feature type="binding site" evidence="1">
    <location>
        <position position="103"/>
    </location>
    <ligand>
        <name>Zn(2+)</name>
        <dbReference type="ChEBI" id="CHEBI:29105"/>
    </ligand>
</feature>
<feature type="binding site" evidence="1">
    <location>
        <position position="105"/>
    </location>
    <ligand>
        <name>Zn(2+)</name>
        <dbReference type="ChEBI" id="CHEBI:29105"/>
    </ligand>
</feature>